<reference key="1">
    <citation type="journal article" date="2004" name="Nature">
        <title>The DNA sequence and comparative analysis of human chromosome 10.</title>
        <authorList>
            <person name="Deloukas P."/>
            <person name="Earthrowl M.E."/>
            <person name="Grafham D.V."/>
            <person name="Rubenfield M."/>
            <person name="French L."/>
            <person name="Steward C.A."/>
            <person name="Sims S.K."/>
            <person name="Jones M.C."/>
            <person name="Searle S."/>
            <person name="Scott C."/>
            <person name="Howe K."/>
            <person name="Hunt S.E."/>
            <person name="Andrews T.D."/>
            <person name="Gilbert J.G.R."/>
            <person name="Swarbreck D."/>
            <person name="Ashurst J.L."/>
            <person name="Taylor A."/>
            <person name="Battles J."/>
            <person name="Bird C.P."/>
            <person name="Ainscough R."/>
            <person name="Almeida J.P."/>
            <person name="Ashwell R.I.S."/>
            <person name="Ambrose K.D."/>
            <person name="Babbage A.K."/>
            <person name="Bagguley C.L."/>
            <person name="Bailey J."/>
            <person name="Banerjee R."/>
            <person name="Bates K."/>
            <person name="Beasley H."/>
            <person name="Bray-Allen S."/>
            <person name="Brown A.J."/>
            <person name="Brown J.Y."/>
            <person name="Burford D.C."/>
            <person name="Burrill W."/>
            <person name="Burton J."/>
            <person name="Cahill P."/>
            <person name="Camire D."/>
            <person name="Carter N.P."/>
            <person name="Chapman J.C."/>
            <person name="Clark S.Y."/>
            <person name="Clarke G."/>
            <person name="Clee C.M."/>
            <person name="Clegg S."/>
            <person name="Corby N."/>
            <person name="Coulson A."/>
            <person name="Dhami P."/>
            <person name="Dutta I."/>
            <person name="Dunn M."/>
            <person name="Faulkner L."/>
            <person name="Frankish A."/>
            <person name="Frankland J.A."/>
            <person name="Garner P."/>
            <person name="Garnett J."/>
            <person name="Gribble S."/>
            <person name="Griffiths C."/>
            <person name="Grocock R."/>
            <person name="Gustafson E."/>
            <person name="Hammond S."/>
            <person name="Harley J.L."/>
            <person name="Hart E."/>
            <person name="Heath P.D."/>
            <person name="Ho T.P."/>
            <person name="Hopkins B."/>
            <person name="Horne J."/>
            <person name="Howden P.J."/>
            <person name="Huckle E."/>
            <person name="Hynds C."/>
            <person name="Johnson C."/>
            <person name="Johnson D."/>
            <person name="Kana A."/>
            <person name="Kay M."/>
            <person name="Kimberley A.M."/>
            <person name="Kershaw J.K."/>
            <person name="Kokkinaki M."/>
            <person name="Laird G.K."/>
            <person name="Lawlor S."/>
            <person name="Lee H.M."/>
            <person name="Leongamornlert D.A."/>
            <person name="Laird G."/>
            <person name="Lloyd C."/>
            <person name="Lloyd D.M."/>
            <person name="Loveland J."/>
            <person name="Lovell J."/>
            <person name="McLaren S."/>
            <person name="McLay K.E."/>
            <person name="McMurray A."/>
            <person name="Mashreghi-Mohammadi M."/>
            <person name="Matthews L."/>
            <person name="Milne S."/>
            <person name="Nickerson T."/>
            <person name="Nguyen M."/>
            <person name="Overton-Larty E."/>
            <person name="Palmer S.A."/>
            <person name="Pearce A.V."/>
            <person name="Peck A.I."/>
            <person name="Pelan S."/>
            <person name="Phillimore B."/>
            <person name="Porter K."/>
            <person name="Rice C.M."/>
            <person name="Rogosin A."/>
            <person name="Ross M.T."/>
            <person name="Sarafidou T."/>
            <person name="Sehra H.K."/>
            <person name="Shownkeen R."/>
            <person name="Skuce C.D."/>
            <person name="Smith M."/>
            <person name="Standring L."/>
            <person name="Sycamore N."/>
            <person name="Tester J."/>
            <person name="Thorpe A."/>
            <person name="Torcasso W."/>
            <person name="Tracey A."/>
            <person name="Tromans A."/>
            <person name="Tsolas J."/>
            <person name="Wall M."/>
            <person name="Walsh J."/>
            <person name="Wang H."/>
            <person name="Weinstock K."/>
            <person name="West A.P."/>
            <person name="Willey D.L."/>
            <person name="Whitehead S.L."/>
            <person name="Wilming L."/>
            <person name="Wray P.W."/>
            <person name="Young L."/>
            <person name="Chen Y."/>
            <person name="Lovering R.C."/>
            <person name="Moschonas N.K."/>
            <person name="Siebert R."/>
            <person name="Fechtel K."/>
            <person name="Bentley D."/>
            <person name="Durbin R.M."/>
            <person name="Hubbard T."/>
            <person name="Doucette-Stamm L."/>
            <person name="Beck S."/>
            <person name="Smith D.R."/>
            <person name="Rogers J."/>
        </authorList>
    </citation>
    <scope>NUCLEOTIDE SEQUENCE [LARGE SCALE GENOMIC DNA]</scope>
</reference>
<reference key="2">
    <citation type="journal article" date="2004" name="Genome Res.">
        <title>The status, quality, and expansion of the NIH full-length cDNA project: the Mammalian Gene Collection (MGC).</title>
        <authorList>
            <consortium name="The MGC Project Team"/>
        </authorList>
    </citation>
    <scope>NUCLEOTIDE SEQUENCE [LARGE SCALE MRNA]</scope>
    <scope>VARIANT ALA-VAL-PRO-GLU-PRO-PRO-277 INS</scope>
    <source>
        <tissue>Cervix</tissue>
        <tissue>Lymph</tissue>
    </source>
</reference>
<reference key="3">
    <citation type="journal article" date="2008" name="Cell">
        <title>A polymorphism in CALHM1 influences Ca2+ homeostasis, Abeta levels, and Alzheimer's disease risk.</title>
        <authorList>
            <person name="Dreses-Werringloer U."/>
            <person name="Lambert J.-C."/>
            <person name="Vingtdeux V."/>
            <person name="Zhao H."/>
            <person name="Vais H."/>
            <person name="Siebert A."/>
            <person name="Jain A."/>
            <person name="Koppel J."/>
            <person name="Rovelet-Lecrux A."/>
            <person name="Hannequin D."/>
            <person name="Pasquier F."/>
            <person name="Galimberti D."/>
            <person name="Scarpini E."/>
            <person name="Mann D."/>
            <person name="Lendon C."/>
            <person name="Campion D."/>
            <person name="Amouyel P."/>
            <person name="Davies P."/>
            <person name="Foskett J.K."/>
            <person name="Campagne F."/>
            <person name="Marambaud P."/>
        </authorList>
    </citation>
    <scope>IDENTIFICATION</scope>
</reference>
<reference key="4">
    <citation type="journal article" date="2009" name="PLoS ONE">
        <title>Expression of genes encoding multi-transmembrane proteins in specific primate taste cell populations.</title>
        <authorList>
            <person name="Moyer B.D."/>
            <person name="Hevezi P."/>
            <person name="Gao N."/>
            <person name="Lu M."/>
            <person name="Kalabat D."/>
            <person name="Soto H."/>
            <person name="Echeverri F."/>
            <person name="Laita B."/>
            <person name="Yeh S.A."/>
            <person name="Zoller M."/>
            <person name="Zlotnik A."/>
        </authorList>
    </citation>
    <scope>TISSUE SPECIFICITY</scope>
</reference>
<protein>
    <recommendedName>
        <fullName>Calcium homeostasis modulator protein 3</fullName>
    </recommendedName>
    <alternativeName>
        <fullName>Protein A</fullName>
    </alternativeName>
</protein>
<comment type="function">
    <text evidence="2">Pore-forming subunit of gustatory voltage-gated ion channels required for sensory perception of sweet, bitter and umami tastes. With CALHM1 forms a fast-activating voltage-gated ATP-release channel in type II taste bud cells, ATP acting as a neurotransmitter to activate afferent neural gustatory pathways. Acts both as a voltage-gated and calcium-activated ion channel: mediates neuronal excitability in response to membrane depolarization and low extracellular Ca(2+) concentration. Has poor ion selectivity and forms a wide pore (around 14 Angstroms) that mediates permeation of small ions including Ca(2+), Na(+), K(+) and Cl(-), as well as larger ions such as ATP(4-).</text>
</comment>
<comment type="catalytic activity">
    <reaction evidence="2">
        <text>ATP(in) = ATP(out)</text>
        <dbReference type="Rhea" id="RHEA:75687"/>
        <dbReference type="ChEBI" id="CHEBI:30616"/>
    </reaction>
</comment>
<comment type="catalytic activity">
    <reaction evidence="2">
        <text>Ca(2+)(in) = Ca(2+)(out)</text>
        <dbReference type="Rhea" id="RHEA:29671"/>
        <dbReference type="ChEBI" id="CHEBI:29108"/>
    </reaction>
</comment>
<comment type="catalytic activity">
    <reaction evidence="2">
        <text>Na(+)(in) = Na(+)(out)</text>
        <dbReference type="Rhea" id="RHEA:34963"/>
        <dbReference type="ChEBI" id="CHEBI:29101"/>
    </reaction>
</comment>
<comment type="catalytic activity">
    <reaction evidence="2">
        <text>K(+)(in) = K(+)(out)</text>
        <dbReference type="Rhea" id="RHEA:29463"/>
        <dbReference type="ChEBI" id="CHEBI:29103"/>
    </reaction>
</comment>
<comment type="catalytic activity">
    <reaction evidence="2">
        <text>chloride(in) = chloride(out)</text>
        <dbReference type="Rhea" id="RHEA:29823"/>
        <dbReference type="ChEBI" id="CHEBI:17996"/>
    </reaction>
</comment>
<comment type="subunit">
    <text evidence="2">Associates with CALHM1 as a pore-forming subunit in a hetero-hexameric channel complex.</text>
</comment>
<comment type="interaction">
    <interactant intactId="EBI-20731541">
        <id>Q86XJ0</id>
    </interactant>
    <interactant intactId="EBI-357481">
        <id>Q12959</id>
        <label>DLG1</label>
    </interactant>
    <organismsDiffer>false</organismsDiffer>
    <experiments>2</experiments>
</comment>
<comment type="subcellular location">
    <subcellularLocation>
        <location evidence="2">Basolateral cell membrane</location>
        <topology evidence="4">Multi-pass membrane protein</topology>
    </subcellularLocation>
</comment>
<comment type="tissue specificity">
    <text evidence="6">Specifically expressed in circumvallate taste bud cells.</text>
</comment>
<comment type="PTM">
    <text evidence="2">N-glycosylated.</text>
</comment>
<comment type="PTM">
    <text evidence="2">Palmitoylated by ZDHHC3 and ZDHHC15. Palmitoylation positively regulates CALHM1:CALHM3 channel conductance.</text>
</comment>
<comment type="similarity">
    <text evidence="7">Belongs to the CALHM family.</text>
</comment>
<feature type="chain" id="PRO_0000186719" description="Calcium homeostasis modulator protein 3">
    <location>
        <begin position="1"/>
        <end position="344"/>
    </location>
</feature>
<feature type="topological domain" description="Cytoplasmic" evidence="7">
    <location>
        <begin position="1"/>
        <end position="20"/>
    </location>
</feature>
<feature type="transmembrane region" description="Helical; Name=S1" evidence="1 3">
    <location>
        <begin position="21"/>
        <end position="36"/>
    </location>
</feature>
<feature type="topological domain" description="Extracellular" evidence="7">
    <location>
        <begin position="37"/>
        <end position="48"/>
    </location>
</feature>
<feature type="transmembrane region" description="Helical; Name=S2" evidence="1 3">
    <location>
        <begin position="49"/>
        <end position="71"/>
    </location>
</feature>
<feature type="topological domain" description="Cytoplasmic" evidence="7">
    <location>
        <begin position="72"/>
        <end position="98"/>
    </location>
</feature>
<feature type="transmembrane region" description="Helical; Name=S3" evidence="1 3">
    <location>
        <begin position="99"/>
        <end position="124"/>
    </location>
</feature>
<feature type="topological domain" description="Extracellular" evidence="7">
    <location>
        <begin position="125"/>
        <end position="176"/>
    </location>
</feature>
<feature type="transmembrane region" description="Helical; Name=S4" evidence="1 3">
    <location>
        <begin position="177"/>
        <end position="202"/>
    </location>
</feature>
<feature type="topological domain" description="Cytoplasmic" evidence="7">
    <location>
        <begin position="203"/>
        <end position="344"/>
    </location>
</feature>
<feature type="region of interest" description="Central pore" evidence="1">
    <location>
        <begin position="9"/>
        <end position="36"/>
    </location>
</feature>
<feature type="lipid moiety-binding region" description="S-palmitoyl cysteine" evidence="2">
    <location>
        <position position="99"/>
    </location>
</feature>
<feature type="lipid moiety-binding region" description="S-palmitoyl cysteine" evidence="2">
    <location>
        <position position="200"/>
    </location>
</feature>
<feature type="lipid moiety-binding region" description="S-palmitoyl cysteine" evidence="2">
    <location>
        <position position="204"/>
    </location>
</feature>
<feature type="glycosylation site" description="N-linked (GlcNAc...) asparagine" evidence="2">
    <location>
        <position position="142"/>
    </location>
</feature>
<feature type="disulfide bond" evidence="3">
    <location>
        <begin position="41"/>
        <end position="126"/>
    </location>
</feature>
<feature type="disulfide bond" evidence="3">
    <location>
        <begin position="43"/>
        <end position="157"/>
    </location>
</feature>
<feature type="sequence variant" id="VAR_081109" description="In dbSNP:rs143800079." evidence="5">
    <original>P</original>
    <variation>PAVPEPP</variation>
    <location>
        <position position="277"/>
    </location>
</feature>
<gene>
    <name evidence="8" type="primary">CALHM3</name>
    <name type="synonym">FAM26A</name>
</gene>
<sequence>MDKFRMLFQHFQSSSESVMNGICLLLAAVTVKLYSSFDFNCPCLVHYNALYGLGLLLTPPLALFLCGLLANRQSVVMVEEWRRPAGHRRKDPGIIRYMCSSVLQRALAAPLVWILLALLDGKCFVCAFSSSVDPEKFLDFANMTPSQVQLFLAKVPCKEDELVRDSPARKAVSRYLRCLSQAIGWSVTLLLIIAAFLARCLRPCFDQTVFLQRRYWSNYVDLEQKLFDETCCEHARDFAHRCVLHFFASMRSELQARGLRRGNAGRRLELPAVPEPPEGLDSGSGKAHLRAISSREQVDRLLSTWYSSKPPLDLAASPGLCGGGLSHRAPTLALGTRLSQHTDV</sequence>
<name>CAHM3_HUMAN</name>
<evidence type="ECO:0000250" key="1">
    <source>
        <dbReference type="UniProtKB" id="H2MCM1"/>
    </source>
</evidence>
<evidence type="ECO:0000250" key="2">
    <source>
        <dbReference type="UniProtKB" id="J3QMI4"/>
    </source>
</evidence>
<evidence type="ECO:0000250" key="3">
    <source>
        <dbReference type="UniProtKB" id="Q8IU99"/>
    </source>
</evidence>
<evidence type="ECO:0000255" key="4"/>
<evidence type="ECO:0000269" key="5">
    <source>
    </source>
</evidence>
<evidence type="ECO:0000269" key="6">
    <source>
    </source>
</evidence>
<evidence type="ECO:0000305" key="7"/>
<evidence type="ECO:0000312" key="8">
    <source>
        <dbReference type="HGNC" id="HGNC:23458"/>
    </source>
</evidence>
<accession>Q86XJ0</accession>
<accession>Q5W090</accession>
<accession>Q8IXR2</accession>
<dbReference type="EMBL" id="AL139339">
    <property type="status" value="NOT_ANNOTATED_CDS"/>
    <property type="molecule type" value="Genomic_DNA"/>
</dbReference>
<dbReference type="EMBL" id="BC039499">
    <property type="protein sequence ID" value="AAH39499.1"/>
    <property type="molecule type" value="mRNA"/>
</dbReference>
<dbReference type="EMBL" id="BC043367">
    <property type="protein sequence ID" value="AAH43367.1"/>
    <property type="molecule type" value="mRNA"/>
</dbReference>
<dbReference type="CCDS" id="CCDS44476.1"/>
<dbReference type="RefSeq" id="NP_001123214.1">
    <property type="nucleotide sequence ID" value="NM_001129742.2"/>
</dbReference>
<dbReference type="SMR" id="Q86XJ0"/>
<dbReference type="BioGRID" id="125640">
    <property type="interactions" value="1"/>
</dbReference>
<dbReference type="FunCoup" id="Q86XJ0">
    <property type="interactions" value="9"/>
</dbReference>
<dbReference type="IntAct" id="Q86XJ0">
    <property type="interactions" value="2"/>
</dbReference>
<dbReference type="STRING" id="9606.ENSP00000358798"/>
<dbReference type="TCDB" id="1.A.84.1.3">
    <property type="family name" value="the calcium homeostasis modulator ca(2+) channel (calhm-c) family"/>
</dbReference>
<dbReference type="GlyGen" id="Q86XJ0">
    <property type="glycosylation" value="1 site"/>
</dbReference>
<dbReference type="iPTMnet" id="Q86XJ0"/>
<dbReference type="PhosphoSitePlus" id="Q86XJ0"/>
<dbReference type="BioMuta" id="CALHM3"/>
<dbReference type="DMDM" id="68565591"/>
<dbReference type="MassIVE" id="Q86XJ0"/>
<dbReference type="PaxDb" id="9606-ENSP00000358798"/>
<dbReference type="PeptideAtlas" id="Q86XJ0"/>
<dbReference type="Antibodypedia" id="3118">
    <property type="antibodies" value="113 antibodies from 21 providers"/>
</dbReference>
<dbReference type="DNASU" id="119395"/>
<dbReference type="Ensembl" id="ENST00000369783.4">
    <property type="protein sequence ID" value="ENSP00000358798.4"/>
    <property type="gene ID" value="ENSG00000183128.7"/>
</dbReference>
<dbReference type="GeneID" id="119395"/>
<dbReference type="KEGG" id="hsa:119395"/>
<dbReference type="MANE-Select" id="ENST00000369783.4">
    <property type="protein sequence ID" value="ENSP00000358798.4"/>
    <property type="RefSeq nucleotide sequence ID" value="NM_001129742.2"/>
    <property type="RefSeq protein sequence ID" value="NP_001123214.1"/>
</dbReference>
<dbReference type="UCSC" id="uc001kxg.4">
    <property type="organism name" value="human"/>
</dbReference>
<dbReference type="AGR" id="HGNC:23458"/>
<dbReference type="CTD" id="119395"/>
<dbReference type="DisGeNET" id="119395"/>
<dbReference type="GeneCards" id="CALHM3"/>
<dbReference type="HGNC" id="HGNC:23458">
    <property type="gene designation" value="CALHM3"/>
</dbReference>
<dbReference type="HPA" id="ENSG00000183128">
    <property type="expression patterns" value="Not detected"/>
</dbReference>
<dbReference type="MIM" id="618263">
    <property type="type" value="gene"/>
</dbReference>
<dbReference type="neXtProt" id="NX_Q86XJ0"/>
<dbReference type="OpenTargets" id="ENSG00000183128"/>
<dbReference type="PharmGKB" id="PA162380976"/>
<dbReference type="VEuPathDB" id="HostDB:ENSG00000183128"/>
<dbReference type="eggNOG" id="ENOG502QRUK">
    <property type="taxonomic scope" value="Eukaryota"/>
</dbReference>
<dbReference type="GeneTree" id="ENSGT01030000234610"/>
<dbReference type="HOGENOM" id="CLU_069286_0_0_1"/>
<dbReference type="InParanoid" id="Q86XJ0"/>
<dbReference type="OMA" id="RCWSQAL"/>
<dbReference type="OrthoDB" id="5978124at2759"/>
<dbReference type="PAN-GO" id="Q86XJ0">
    <property type="GO annotations" value="2 GO annotations based on evolutionary models"/>
</dbReference>
<dbReference type="PhylomeDB" id="Q86XJ0"/>
<dbReference type="TreeFam" id="TF329085"/>
<dbReference type="PathwayCommons" id="Q86XJ0"/>
<dbReference type="Reactome" id="R-HSA-9717207">
    <property type="pathway name" value="Sensory perception of sweet, bitter, and umami (glutamate) taste"/>
</dbReference>
<dbReference type="Reactome" id="R-HSA-9730628">
    <property type="pathway name" value="Sensory perception of salty taste"/>
</dbReference>
<dbReference type="SignaLink" id="Q86XJ0"/>
<dbReference type="BioGRID-ORCS" id="119395">
    <property type="hits" value="7 hits in 1143 CRISPR screens"/>
</dbReference>
<dbReference type="GenomeRNAi" id="119395"/>
<dbReference type="Pharos" id="Q86XJ0">
    <property type="development level" value="Tdark"/>
</dbReference>
<dbReference type="PRO" id="PR:Q86XJ0"/>
<dbReference type="Proteomes" id="UP000005640">
    <property type="component" value="Chromosome 10"/>
</dbReference>
<dbReference type="RNAct" id="Q86XJ0">
    <property type="molecule type" value="protein"/>
</dbReference>
<dbReference type="Bgee" id="ENSG00000183128">
    <property type="expression patterns" value="Expressed in male germ line stem cell (sensu Vertebrata) in testis and 19 other cell types or tissues"/>
</dbReference>
<dbReference type="GO" id="GO:0016323">
    <property type="term" value="C:basolateral plasma membrane"/>
    <property type="evidence" value="ECO:0000250"/>
    <property type="project" value="UniProtKB"/>
</dbReference>
<dbReference type="GO" id="GO:0005886">
    <property type="term" value="C:plasma membrane"/>
    <property type="evidence" value="ECO:0000318"/>
    <property type="project" value="GO_Central"/>
</dbReference>
<dbReference type="GO" id="GO:0005262">
    <property type="term" value="F:calcium channel activity"/>
    <property type="evidence" value="ECO:0007669"/>
    <property type="project" value="UniProtKB-KW"/>
</dbReference>
<dbReference type="GO" id="GO:0005261">
    <property type="term" value="F:monoatomic cation channel activity"/>
    <property type="evidence" value="ECO:0000318"/>
    <property type="project" value="GO_Central"/>
</dbReference>
<dbReference type="GO" id="GO:0005244">
    <property type="term" value="F:voltage-gated monoatomic ion channel activity"/>
    <property type="evidence" value="ECO:0000250"/>
    <property type="project" value="UniProtKB"/>
</dbReference>
<dbReference type="GO" id="GO:1904669">
    <property type="term" value="P:ATP export"/>
    <property type="evidence" value="ECO:0007669"/>
    <property type="project" value="Ensembl"/>
</dbReference>
<dbReference type="GO" id="GO:0015867">
    <property type="term" value="P:ATP transport"/>
    <property type="evidence" value="ECO:0000250"/>
    <property type="project" value="UniProtKB"/>
</dbReference>
<dbReference type="GO" id="GO:0051291">
    <property type="term" value="P:protein heterooligomerization"/>
    <property type="evidence" value="ECO:0000250"/>
    <property type="project" value="UniProtKB"/>
</dbReference>
<dbReference type="GO" id="GO:0050909">
    <property type="term" value="P:sensory perception of taste"/>
    <property type="evidence" value="ECO:0000250"/>
    <property type="project" value="UniProtKB"/>
</dbReference>
<dbReference type="InterPro" id="IPR029569">
    <property type="entry name" value="CALHM"/>
</dbReference>
<dbReference type="PANTHER" id="PTHR32261">
    <property type="entry name" value="CALCIUM HOMEOSTASIS MODULATOR PROTEIN"/>
    <property type="match status" value="1"/>
</dbReference>
<dbReference type="PANTHER" id="PTHR32261:SF7">
    <property type="entry name" value="CALCIUM HOMEOSTASIS MODULATOR PROTEIN 3"/>
    <property type="match status" value="1"/>
</dbReference>
<dbReference type="Pfam" id="PF14798">
    <property type="entry name" value="Ca_hom_mod"/>
    <property type="match status" value="1"/>
</dbReference>
<keyword id="KW-0106">Calcium</keyword>
<keyword id="KW-0107">Calcium channel</keyword>
<keyword id="KW-0109">Calcium transport</keyword>
<keyword id="KW-1003">Cell membrane</keyword>
<keyword id="KW-1015">Disulfide bond</keyword>
<keyword id="KW-0325">Glycoprotein</keyword>
<keyword id="KW-0407">Ion channel</keyword>
<keyword id="KW-0406">Ion transport</keyword>
<keyword id="KW-0449">Lipoprotein</keyword>
<keyword id="KW-0472">Membrane</keyword>
<keyword id="KW-0564">Palmitate</keyword>
<keyword id="KW-1185">Reference proteome</keyword>
<keyword id="KW-0716">Sensory transduction</keyword>
<keyword id="KW-0919">Taste</keyword>
<keyword id="KW-0812">Transmembrane</keyword>
<keyword id="KW-1133">Transmembrane helix</keyword>
<keyword id="KW-0813">Transport</keyword>
<proteinExistence type="evidence at protein level"/>
<organism>
    <name type="scientific">Homo sapiens</name>
    <name type="common">Human</name>
    <dbReference type="NCBI Taxonomy" id="9606"/>
    <lineage>
        <taxon>Eukaryota</taxon>
        <taxon>Metazoa</taxon>
        <taxon>Chordata</taxon>
        <taxon>Craniata</taxon>
        <taxon>Vertebrata</taxon>
        <taxon>Euteleostomi</taxon>
        <taxon>Mammalia</taxon>
        <taxon>Eutheria</taxon>
        <taxon>Euarchontoglires</taxon>
        <taxon>Primates</taxon>
        <taxon>Haplorrhini</taxon>
        <taxon>Catarrhini</taxon>
        <taxon>Hominidae</taxon>
        <taxon>Homo</taxon>
    </lineage>
</organism>